<gene>
    <name evidence="1" type="primary">lspA</name>
    <name type="ordered locus">Ssed_1195</name>
</gene>
<accession>A8FSI3</accession>
<comment type="function">
    <text evidence="1">This protein specifically catalyzes the removal of signal peptides from prolipoproteins.</text>
</comment>
<comment type="catalytic activity">
    <reaction evidence="1">
        <text>Release of signal peptides from bacterial membrane prolipoproteins. Hydrolyzes -Xaa-Yaa-Zaa-|-(S,diacylglyceryl)Cys-, in which Xaa is hydrophobic (preferably Leu), and Yaa (Ala or Ser) and Zaa (Gly or Ala) have small, neutral side chains.</text>
        <dbReference type="EC" id="3.4.23.36"/>
    </reaction>
</comment>
<comment type="pathway">
    <text evidence="1">Protein modification; lipoprotein biosynthesis (signal peptide cleavage).</text>
</comment>
<comment type="subcellular location">
    <subcellularLocation>
        <location evidence="1">Cell inner membrane</location>
        <topology evidence="1">Multi-pass membrane protein</topology>
    </subcellularLocation>
</comment>
<comment type="similarity">
    <text evidence="1">Belongs to the peptidase A8 family.</text>
</comment>
<sequence length="176" mass="20099">MPTNWKDSGLRWYWVVVLVFIADQVSKQWVLTNFELHESVNLLPFFNFTYVRNYGAAFSFLSDAGGWQKWLFTFIAVAFSTILTIWLRKQPTKVWRLNLAYTLVIGGALGNLIDRLQHGYVVDFLDFFWNTSHFAAFNIADSAICIGAGLIILDSFIGDDKEKSQNGQNDNNAAKE</sequence>
<organism>
    <name type="scientific">Shewanella sediminis (strain HAW-EB3)</name>
    <dbReference type="NCBI Taxonomy" id="425104"/>
    <lineage>
        <taxon>Bacteria</taxon>
        <taxon>Pseudomonadati</taxon>
        <taxon>Pseudomonadota</taxon>
        <taxon>Gammaproteobacteria</taxon>
        <taxon>Alteromonadales</taxon>
        <taxon>Shewanellaceae</taxon>
        <taxon>Shewanella</taxon>
    </lineage>
</organism>
<keyword id="KW-0064">Aspartyl protease</keyword>
<keyword id="KW-0997">Cell inner membrane</keyword>
<keyword id="KW-1003">Cell membrane</keyword>
<keyword id="KW-0378">Hydrolase</keyword>
<keyword id="KW-0472">Membrane</keyword>
<keyword id="KW-0645">Protease</keyword>
<keyword id="KW-1185">Reference proteome</keyword>
<keyword id="KW-0812">Transmembrane</keyword>
<keyword id="KW-1133">Transmembrane helix</keyword>
<proteinExistence type="inferred from homology"/>
<feature type="chain" id="PRO_1000076933" description="Lipoprotein signal peptidase">
    <location>
        <begin position="1"/>
        <end position="176"/>
    </location>
</feature>
<feature type="transmembrane region" description="Helical" evidence="1">
    <location>
        <begin position="12"/>
        <end position="32"/>
    </location>
</feature>
<feature type="transmembrane region" description="Helical" evidence="1">
    <location>
        <begin position="67"/>
        <end position="87"/>
    </location>
</feature>
<feature type="transmembrane region" description="Helical" evidence="1">
    <location>
        <begin position="94"/>
        <end position="114"/>
    </location>
</feature>
<feature type="transmembrane region" description="Helical" evidence="1">
    <location>
        <begin position="133"/>
        <end position="153"/>
    </location>
</feature>
<feature type="active site" evidence="1">
    <location>
        <position position="123"/>
    </location>
</feature>
<feature type="active site" evidence="1">
    <location>
        <position position="141"/>
    </location>
</feature>
<reference key="1">
    <citation type="submission" date="2007-08" db="EMBL/GenBank/DDBJ databases">
        <title>Complete sequence of Shewanella sediminis HAW-EB3.</title>
        <authorList>
            <consortium name="US DOE Joint Genome Institute"/>
            <person name="Copeland A."/>
            <person name="Lucas S."/>
            <person name="Lapidus A."/>
            <person name="Barry K."/>
            <person name="Glavina del Rio T."/>
            <person name="Dalin E."/>
            <person name="Tice H."/>
            <person name="Pitluck S."/>
            <person name="Chertkov O."/>
            <person name="Brettin T."/>
            <person name="Bruce D."/>
            <person name="Detter J.C."/>
            <person name="Han C."/>
            <person name="Schmutz J."/>
            <person name="Larimer F."/>
            <person name="Land M."/>
            <person name="Hauser L."/>
            <person name="Kyrpides N."/>
            <person name="Kim E."/>
            <person name="Zhao J.-S."/>
            <person name="Richardson P."/>
        </authorList>
    </citation>
    <scope>NUCLEOTIDE SEQUENCE [LARGE SCALE GENOMIC DNA]</scope>
    <source>
        <strain>HAW-EB3</strain>
    </source>
</reference>
<protein>
    <recommendedName>
        <fullName evidence="1">Lipoprotein signal peptidase</fullName>
        <ecNumber evidence="1">3.4.23.36</ecNumber>
    </recommendedName>
    <alternativeName>
        <fullName evidence="1">Prolipoprotein signal peptidase</fullName>
    </alternativeName>
    <alternativeName>
        <fullName evidence="1">Signal peptidase II</fullName>
        <shortName evidence="1">SPase II</shortName>
    </alternativeName>
</protein>
<evidence type="ECO:0000255" key="1">
    <source>
        <dbReference type="HAMAP-Rule" id="MF_00161"/>
    </source>
</evidence>
<dbReference type="EC" id="3.4.23.36" evidence="1"/>
<dbReference type="EMBL" id="CP000821">
    <property type="protein sequence ID" value="ABV35806.1"/>
    <property type="molecule type" value="Genomic_DNA"/>
</dbReference>
<dbReference type="RefSeq" id="WP_012141542.1">
    <property type="nucleotide sequence ID" value="NC_009831.1"/>
</dbReference>
<dbReference type="SMR" id="A8FSI3"/>
<dbReference type="STRING" id="425104.Ssed_1195"/>
<dbReference type="MEROPS" id="A08.001"/>
<dbReference type="KEGG" id="sse:Ssed_1195"/>
<dbReference type="eggNOG" id="COG0597">
    <property type="taxonomic scope" value="Bacteria"/>
</dbReference>
<dbReference type="HOGENOM" id="CLU_083252_4_0_6"/>
<dbReference type="OrthoDB" id="9810259at2"/>
<dbReference type="UniPathway" id="UPA00665"/>
<dbReference type="Proteomes" id="UP000002015">
    <property type="component" value="Chromosome"/>
</dbReference>
<dbReference type="GO" id="GO:0005886">
    <property type="term" value="C:plasma membrane"/>
    <property type="evidence" value="ECO:0007669"/>
    <property type="project" value="UniProtKB-SubCell"/>
</dbReference>
<dbReference type="GO" id="GO:0004190">
    <property type="term" value="F:aspartic-type endopeptidase activity"/>
    <property type="evidence" value="ECO:0007669"/>
    <property type="project" value="UniProtKB-UniRule"/>
</dbReference>
<dbReference type="GO" id="GO:0006508">
    <property type="term" value="P:proteolysis"/>
    <property type="evidence" value="ECO:0007669"/>
    <property type="project" value="UniProtKB-KW"/>
</dbReference>
<dbReference type="HAMAP" id="MF_00161">
    <property type="entry name" value="LspA"/>
    <property type="match status" value="1"/>
</dbReference>
<dbReference type="InterPro" id="IPR001872">
    <property type="entry name" value="Peptidase_A8"/>
</dbReference>
<dbReference type="NCBIfam" id="TIGR00077">
    <property type="entry name" value="lspA"/>
    <property type="match status" value="1"/>
</dbReference>
<dbReference type="PANTHER" id="PTHR33695">
    <property type="entry name" value="LIPOPROTEIN SIGNAL PEPTIDASE"/>
    <property type="match status" value="1"/>
</dbReference>
<dbReference type="PANTHER" id="PTHR33695:SF1">
    <property type="entry name" value="LIPOPROTEIN SIGNAL PEPTIDASE"/>
    <property type="match status" value="1"/>
</dbReference>
<dbReference type="Pfam" id="PF01252">
    <property type="entry name" value="Peptidase_A8"/>
    <property type="match status" value="1"/>
</dbReference>
<dbReference type="PRINTS" id="PR00781">
    <property type="entry name" value="LIPOSIGPTASE"/>
</dbReference>
<dbReference type="PROSITE" id="PS00855">
    <property type="entry name" value="SPASE_II"/>
    <property type="match status" value="1"/>
</dbReference>
<name>LSPA_SHESH</name>